<accession>P69123</accession>
<accession>P17705</accession>
<evidence type="ECO:0000250" key="1"/>
<evidence type="ECO:0000256" key="2">
    <source>
        <dbReference type="SAM" id="MobiDB-lite"/>
    </source>
</evidence>
<evidence type="ECO:0000305" key="3"/>
<feature type="initiator methionine" description="Removed" evidence="1">
    <location>
        <position position="1"/>
    </location>
</feature>
<feature type="chain" id="PRO_0000221344" description="Histone H3.2">
    <location>
        <begin position="2"/>
        <end position="41" status="greater than"/>
    </location>
</feature>
<feature type="region of interest" description="Disordered" evidence="2">
    <location>
        <begin position="1"/>
        <end position="41"/>
    </location>
</feature>
<feature type="non-terminal residue">
    <location>
        <position position="41"/>
    </location>
</feature>
<reference key="1">
    <citation type="journal article" date="1990" name="Nucleic Acids Res.">
        <title>Characterization of the promoter region of Tetrahymena genes.</title>
        <authorList>
            <person name="Brunk C.F."/>
            <person name="Sadler L.A."/>
        </authorList>
    </citation>
    <scope>NUCLEOTIDE SEQUENCE [GENOMIC DNA]</scope>
</reference>
<reference key="2">
    <citation type="journal article" date="1990" name="J. Mol. Evol.">
        <title>Phylogenetic relationships among Tetrahymena species determined using the polymerase chain reaction.</title>
        <authorList>
            <person name="Brunk C.F."/>
            <person name="Kahn R.W."/>
            <person name="Sadler L.A."/>
        </authorList>
    </citation>
    <scope>NUCLEOTIDE SEQUENCE [GENOMIC DNA]</scope>
</reference>
<keyword id="KW-0158">Chromosome</keyword>
<keyword id="KW-0238">DNA-binding</keyword>
<keyword id="KW-0544">Nucleosome core</keyword>
<keyword id="KW-0539">Nucleus</keyword>
<dbReference type="EMBL" id="X17140">
    <property type="protein sequence ID" value="CAA35014.1"/>
    <property type="molecule type" value="Genomic_DNA"/>
</dbReference>
<dbReference type="GO" id="GO:0000786">
    <property type="term" value="C:nucleosome"/>
    <property type="evidence" value="ECO:0007669"/>
    <property type="project" value="UniProtKB-KW"/>
</dbReference>
<dbReference type="GO" id="GO:0005634">
    <property type="term" value="C:nucleus"/>
    <property type="evidence" value="ECO:0007669"/>
    <property type="project" value="UniProtKB-SubCell"/>
</dbReference>
<dbReference type="GO" id="GO:0003677">
    <property type="term" value="F:DNA binding"/>
    <property type="evidence" value="ECO:0007669"/>
    <property type="project" value="UniProtKB-KW"/>
</dbReference>
<dbReference type="GO" id="GO:0046982">
    <property type="term" value="F:protein heterodimerization activity"/>
    <property type="evidence" value="ECO:0007669"/>
    <property type="project" value="InterPro"/>
</dbReference>
<dbReference type="GO" id="GO:0030527">
    <property type="term" value="F:structural constituent of chromatin"/>
    <property type="evidence" value="ECO:0007669"/>
    <property type="project" value="InterPro"/>
</dbReference>
<dbReference type="Gene3D" id="1.10.20.10">
    <property type="entry name" value="Histone, subunit A"/>
    <property type="match status" value="1"/>
</dbReference>
<dbReference type="InterPro" id="IPR009072">
    <property type="entry name" value="Histone-fold"/>
</dbReference>
<dbReference type="InterPro" id="IPR000164">
    <property type="entry name" value="Histone_H3/CENP-A"/>
</dbReference>
<dbReference type="PANTHER" id="PTHR11426">
    <property type="entry name" value="HISTONE H3"/>
    <property type="match status" value="1"/>
</dbReference>
<dbReference type="PRINTS" id="PR00622">
    <property type="entry name" value="HISTONEH3"/>
</dbReference>
<dbReference type="SUPFAM" id="SSF47113">
    <property type="entry name" value="Histone-fold"/>
    <property type="match status" value="1"/>
</dbReference>
<dbReference type="PROSITE" id="PS00322">
    <property type="entry name" value="HISTONE_H3_1"/>
    <property type="match status" value="1"/>
</dbReference>
<name>H32_TETPA</name>
<organism>
    <name type="scientific">Tetrahymena patula</name>
    <dbReference type="NCBI Taxonomy" id="5906"/>
    <lineage>
        <taxon>Eukaryota</taxon>
        <taxon>Sar</taxon>
        <taxon>Alveolata</taxon>
        <taxon>Ciliophora</taxon>
        <taxon>Intramacronucleata</taxon>
        <taxon>Oligohymenophorea</taxon>
        <taxon>Hymenostomatida</taxon>
        <taxon>Tetrahymenina</taxon>
        <taxon>Tetrahymenidae</taxon>
        <taxon>Tetrahymena</taxon>
    </lineage>
</organism>
<comment type="function">
    <text>Core component of nucleosome. Nucleosomes wrap and compact DNA into chromatin, limiting DNA accessibility to the cellular machineries which require DNA as a template. Histones thereby play a central role in transcription regulation, DNA repair, DNA replication and chromosomal stability. DNA accessibility is regulated via a complex set of post-translational modifications of histones, also called histone code, and nucleosome remodeling.</text>
</comment>
<comment type="subunit">
    <text>The nucleosome is a histone octamer containing two molecules each of H2A, H2B, H3 and H4 assembled in one H3-H4 heterotetramer and two H2A-H2B heterodimers. The octamer wraps approximately 147 bp of DNA.</text>
</comment>
<comment type="subcellular location">
    <subcellularLocation>
        <location evidence="1">Nucleus</location>
    </subcellularLocation>
    <subcellularLocation>
        <location evidence="1">Chromosome</location>
    </subcellularLocation>
</comment>
<comment type="similarity">
    <text evidence="3">Belongs to the histone H3 family.</text>
</comment>
<proteinExistence type="inferred from homology"/>
<sequence>MARTKQTARKSTGAKAPRKQLASKAARKSAPATGGIKKPHR</sequence>
<protein>
    <recommendedName>
        <fullName>Histone H3.2</fullName>
    </recommendedName>
</protein>